<evidence type="ECO:0000255" key="1">
    <source>
        <dbReference type="HAMAP-Rule" id="MF_00473"/>
    </source>
</evidence>
<comment type="function">
    <text evidence="1">Catalyzes the reversible isomerization of glucose-6-phosphate to fructose-6-phosphate.</text>
</comment>
<comment type="catalytic activity">
    <reaction evidence="1">
        <text>alpha-D-glucose 6-phosphate = beta-D-fructose 6-phosphate</text>
        <dbReference type="Rhea" id="RHEA:11816"/>
        <dbReference type="ChEBI" id="CHEBI:57634"/>
        <dbReference type="ChEBI" id="CHEBI:58225"/>
        <dbReference type="EC" id="5.3.1.9"/>
    </reaction>
</comment>
<comment type="pathway">
    <text evidence="1">Carbohydrate biosynthesis; gluconeogenesis.</text>
</comment>
<comment type="pathway">
    <text evidence="1">Carbohydrate degradation; glycolysis; D-glyceraldehyde 3-phosphate and glycerone phosphate from D-glucose: step 2/4.</text>
</comment>
<comment type="subcellular location">
    <subcellularLocation>
        <location evidence="1">Cytoplasm</location>
    </subcellularLocation>
</comment>
<comment type="similarity">
    <text evidence="1">Belongs to the GPI family.</text>
</comment>
<accession>A5W976</accession>
<protein>
    <recommendedName>
        <fullName evidence="1">Glucose-6-phosphate isomerase</fullName>
        <shortName evidence="1">GPI</shortName>
        <ecNumber evidence="1">5.3.1.9</ecNumber>
    </recommendedName>
    <alternativeName>
        <fullName evidence="1">Phosphoglucose isomerase</fullName>
        <shortName evidence="1">PGI</shortName>
    </alternativeName>
    <alternativeName>
        <fullName evidence="1">Phosphohexose isomerase</fullName>
        <shortName evidence="1">PHI</shortName>
    </alternativeName>
</protein>
<name>G6PI_PSEP1</name>
<feature type="chain" id="PRO_1000014005" description="Glucose-6-phosphate isomerase">
    <location>
        <begin position="1"/>
        <end position="554"/>
    </location>
</feature>
<feature type="active site" description="Proton donor" evidence="1">
    <location>
        <position position="359"/>
    </location>
</feature>
<feature type="active site" evidence="1">
    <location>
        <position position="390"/>
    </location>
</feature>
<feature type="active site" evidence="1">
    <location>
        <position position="518"/>
    </location>
</feature>
<gene>
    <name evidence="1" type="primary">pgi</name>
    <name type="ordered locus">Pput_4566</name>
</gene>
<organism>
    <name type="scientific">Pseudomonas putida (strain ATCC 700007 / DSM 6899 / JCM 31910 / BCRC 17059 / LMG 24140 / F1)</name>
    <dbReference type="NCBI Taxonomy" id="351746"/>
    <lineage>
        <taxon>Bacteria</taxon>
        <taxon>Pseudomonadati</taxon>
        <taxon>Pseudomonadota</taxon>
        <taxon>Gammaproteobacteria</taxon>
        <taxon>Pseudomonadales</taxon>
        <taxon>Pseudomonadaceae</taxon>
        <taxon>Pseudomonas</taxon>
    </lineage>
</organism>
<reference key="1">
    <citation type="submission" date="2007-05" db="EMBL/GenBank/DDBJ databases">
        <title>Complete sequence of Pseudomonas putida F1.</title>
        <authorList>
            <consortium name="US DOE Joint Genome Institute"/>
            <person name="Copeland A."/>
            <person name="Lucas S."/>
            <person name="Lapidus A."/>
            <person name="Barry K."/>
            <person name="Detter J.C."/>
            <person name="Glavina del Rio T."/>
            <person name="Hammon N."/>
            <person name="Israni S."/>
            <person name="Dalin E."/>
            <person name="Tice H."/>
            <person name="Pitluck S."/>
            <person name="Chain P."/>
            <person name="Malfatti S."/>
            <person name="Shin M."/>
            <person name="Vergez L."/>
            <person name="Schmutz J."/>
            <person name="Larimer F."/>
            <person name="Land M."/>
            <person name="Hauser L."/>
            <person name="Kyrpides N."/>
            <person name="Lykidis A."/>
            <person name="Parales R."/>
            <person name="Richardson P."/>
        </authorList>
    </citation>
    <scope>NUCLEOTIDE SEQUENCE [LARGE SCALE GENOMIC DNA]</scope>
    <source>
        <strain>ATCC 700007 / DSM 6899 / JCM 31910 / BCRC 17059 / LMG 24140 / F1</strain>
    </source>
</reference>
<keyword id="KW-0963">Cytoplasm</keyword>
<keyword id="KW-0312">Gluconeogenesis</keyword>
<keyword id="KW-0324">Glycolysis</keyword>
<keyword id="KW-0413">Isomerase</keyword>
<proteinExistence type="inferred from homology"/>
<sequence>MAYYRTPHDVTALPAWQALQKHRDAMQSFSMREAFAADAKRFDQFSLSACGLFLDYSKNLITEQSRDLLVSLANEVGLQDAIKSMFSGEIINASEGRPVLHTALRRPVGDKLSVNGVNVMPEVHKVLNQITELVGRIHDGLWRGYSEKPITDVVNIGIGGSFLGPELVSEALLPYAQRGVRCHYLANIDGSEFHELSANLRAETTLFIVSSKSFNTLETLKNAMAARTWYLAQGGSEAELYRHFIAVSSNKAAAVAFGIREENIFPMWDWVGGRYSLWSAIGLPIALAIGTANFKELLSGAYTMDQHFQTAPFDKNMPVLLALLGVWYGNFWDANSHAILPYDHYLRNITKHLQQLDMESNGKSVLQDGTPVKTDTGPVIWGGVGCNGQHAYHQLLHQGTQLIPADFIVPVVSFNPVADHHQWLYANCLSQSQALMLGKTREEAEAELRAKGLNEADIEKLAPHKVIPGNRPSNTLVVERISPRRLGALVAMYEHKVFVQSVIWGINAFDQWGVELGKELGKGVYQRLVGSLEDSAEDGSTQGLINYFRGRHRG</sequence>
<dbReference type="EC" id="5.3.1.9" evidence="1"/>
<dbReference type="EMBL" id="CP000712">
    <property type="protein sequence ID" value="ABQ80686.1"/>
    <property type="molecule type" value="Genomic_DNA"/>
</dbReference>
<dbReference type="SMR" id="A5W976"/>
<dbReference type="KEGG" id="ppf:Pput_4566"/>
<dbReference type="eggNOG" id="COG0166">
    <property type="taxonomic scope" value="Bacteria"/>
</dbReference>
<dbReference type="HOGENOM" id="CLU_017947_3_1_6"/>
<dbReference type="UniPathway" id="UPA00109">
    <property type="reaction ID" value="UER00181"/>
</dbReference>
<dbReference type="UniPathway" id="UPA00138"/>
<dbReference type="GO" id="GO:0005829">
    <property type="term" value="C:cytosol"/>
    <property type="evidence" value="ECO:0007669"/>
    <property type="project" value="TreeGrafter"/>
</dbReference>
<dbReference type="GO" id="GO:0097367">
    <property type="term" value="F:carbohydrate derivative binding"/>
    <property type="evidence" value="ECO:0007669"/>
    <property type="project" value="InterPro"/>
</dbReference>
<dbReference type="GO" id="GO:0004347">
    <property type="term" value="F:glucose-6-phosphate isomerase activity"/>
    <property type="evidence" value="ECO:0007669"/>
    <property type="project" value="UniProtKB-UniRule"/>
</dbReference>
<dbReference type="GO" id="GO:0048029">
    <property type="term" value="F:monosaccharide binding"/>
    <property type="evidence" value="ECO:0007669"/>
    <property type="project" value="TreeGrafter"/>
</dbReference>
<dbReference type="GO" id="GO:0006094">
    <property type="term" value="P:gluconeogenesis"/>
    <property type="evidence" value="ECO:0007669"/>
    <property type="project" value="UniProtKB-UniRule"/>
</dbReference>
<dbReference type="GO" id="GO:0051156">
    <property type="term" value="P:glucose 6-phosphate metabolic process"/>
    <property type="evidence" value="ECO:0007669"/>
    <property type="project" value="TreeGrafter"/>
</dbReference>
<dbReference type="GO" id="GO:0006096">
    <property type="term" value="P:glycolytic process"/>
    <property type="evidence" value="ECO:0007669"/>
    <property type="project" value="UniProtKB-UniRule"/>
</dbReference>
<dbReference type="CDD" id="cd05015">
    <property type="entry name" value="SIS_PGI_1"/>
    <property type="match status" value="1"/>
</dbReference>
<dbReference type="CDD" id="cd05016">
    <property type="entry name" value="SIS_PGI_2"/>
    <property type="match status" value="1"/>
</dbReference>
<dbReference type="FunFam" id="3.40.50.10490:FF:000018">
    <property type="entry name" value="Glucose-6-phosphate isomerase"/>
    <property type="match status" value="1"/>
</dbReference>
<dbReference type="Gene3D" id="1.10.1390.10">
    <property type="match status" value="1"/>
</dbReference>
<dbReference type="Gene3D" id="3.40.50.10490">
    <property type="entry name" value="Glucose-6-phosphate isomerase like protein, domain 1"/>
    <property type="match status" value="2"/>
</dbReference>
<dbReference type="HAMAP" id="MF_00473">
    <property type="entry name" value="G6P_isomerase"/>
    <property type="match status" value="1"/>
</dbReference>
<dbReference type="InterPro" id="IPR001672">
    <property type="entry name" value="G6P_Isomerase"/>
</dbReference>
<dbReference type="InterPro" id="IPR023096">
    <property type="entry name" value="G6P_Isomerase_C"/>
</dbReference>
<dbReference type="InterPro" id="IPR018189">
    <property type="entry name" value="Phosphoglucose_isomerase_CS"/>
</dbReference>
<dbReference type="InterPro" id="IPR046348">
    <property type="entry name" value="SIS_dom_sf"/>
</dbReference>
<dbReference type="InterPro" id="IPR035476">
    <property type="entry name" value="SIS_PGI_1"/>
</dbReference>
<dbReference type="InterPro" id="IPR035482">
    <property type="entry name" value="SIS_PGI_2"/>
</dbReference>
<dbReference type="NCBIfam" id="NF001211">
    <property type="entry name" value="PRK00179.1"/>
    <property type="match status" value="1"/>
</dbReference>
<dbReference type="PANTHER" id="PTHR11469">
    <property type="entry name" value="GLUCOSE-6-PHOSPHATE ISOMERASE"/>
    <property type="match status" value="1"/>
</dbReference>
<dbReference type="PANTHER" id="PTHR11469:SF1">
    <property type="entry name" value="GLUCOSE-6-PHOSPHATE ISOMERASE"/>
    <property type="match status" value="1"/>
</dbReference>
<dbReference type="Pfam" id="PF00342">
    <property type="entry name" value="PGI"/>
    <property type="match status" value="1"/>
</dbReference>
<dbReference type="PRINTS" id="PR00662">
    <property type="entry name" value="G6PISOMERASE"/>
</dbReference>
<dbReference type="SUPFAM" id="SSF53697">
    <property type="entry name" value="SIS domain"/>
    <property type="match status" value="1"/>
</dbReference>
<dbReference type="PROSITE" id="PS00765">
    <property type="entry name" value="P_GLUCOSE_ISOMERASE_1"/>
    <property type="match status" value="1"/>
</dbReference>
<dbReference type="PROSITE" id="PS00174">
    <property type="entry name" value="P_GLUCOSE_ISOMERASE_2"/>
    <property type="match status" value="1"/>
</dbReference>
<dbReference type="PROSITE" id="PS51463">
    <property type="entry name" value="P_GLUCOSE_ISOMERASE_3"/>
    <property type="match status" value="1"/>
</dbReference>